<reference evidence="7" key="1">
    <citation type="journal article" date="2003" name="PLoS Biol.">
        <title>The genome sequence of Caenorhabditis briggsae: a platform for comparative genomics.</title>
        <authorList>
            <person name="Stein L.D."/>
            <person name="Bao Z."/>
            <person name="Blasiar D."/>
            <person name="Blumenthal T."/>
            <person name="Brent M.R."/>
            <person name="Chen N."/>
            <person name="Chinwalla A."/>
            <person name="Clarke L."/>
            <person name="Clee C."/>
            <person name="Coghlan A."/>
            <person name="Coulson A."/>
            <person name="D'Eustachio P."/>
            <person name="Fitch D.H.A."/>
            <person name="Fulton L.A."/>
            <person name="Fulton R.E."/>
            <person name="Griffiths-Jones S."/>
            <person name="Harris T.W."/>
            <person name="Hillier L.W."/>
            <person name="Kamath R."/>
            <person name="Kuwabara P.E."/>
            <person name="Mardis E.R."/>
            <person name="Marra M.A."/>
            <person name="Miner T.L."/>
            <person name="Minx P."/>
            <person name="Mullikin J.C."/>
            <person name="Plumb R.W."/>
            <person name="Rogers J."/>
            <person name="Schein J.E."/>
            <person name="Sohrmann M."/>
            <person name="Spieth J."/>
            <person name="Stajich J.E."/>
            <person name="Wei C."/>
            <person name="Willey D."/>
            <person name="Wilson R.K."/>
            <person name="Durbin R.M."/>
            <person name="Waterston R.H."/>
        </authorList>
    </citation>
    <scope>NUCLEOTIDE SEQUENCE [LARGE SCALE GENOMIC DNA]</scope>
    <source>
        <strain evidence="7">AF16</strain>
    </source>
</reference>
<reference evidence="6" key="2">
    <citation type="journal article" date="2006" name="Cell. Signal.">
        <title>Expression of multiple isoforms of the cAMP-dependent protein kinase (PK-A) catalytic subunit in the nematode, Caenorhabditis elegans.</title>
        <authorList>
            <person name="Bowen L.C."/>
            <person name="Bicknell A.V."/>
            <person name="Tabish M."/>
            <person name="Clegg R.A."/>
            <person name="Rees H.H."/>
            <person name="Fisher M.J."/>
        </authorList>
    </citation>
    <scope>IDENTIFICATION</scope>
    <scope>DEVELOPMENTAL STAGE</scope>
</reference>
<feature type="chain" id="PRO_0000432402" description="cAMP-dependent protein kinase catalytic subunit" evidence="1">
    <location>
        <begin position="1"/>
        <end position="358"/>
    </location>
</feature>
<feature type="domain" description="Protein kinase" evidence="3">
    <location>
        <begin position="52"/>
        <end position="305"/>
    </location>
</feature>
<feature type="region of interest" description="Disordered" evidence="4">
    <location>
        <begin position="1"/>
        <end position="22"/>
    </location>
</feature>
<feature type="compositionally biased region" description="Basic and acidic residues" evidence="4">
    <location>
        <begin position="8"/>
        <end position="19"/>
    </location>
</feature>
<feature type="active site" description="Proton acceptor" evidence="3">
    <location>
        <position position="175"/>
    </location>
</feature>
<feature type="binding site" evidence="3">
    <location>
        <begin position="58"/>
        <end position="66"/>
    </location>
    <ligand>
        <name>ATP</name>
        <dbReference type="ChEBI" id="CHEBI:30616"/>
    </ligand>
</feature>
<feature type="binding site" evidence="3">
    <location>
        <position position="81"/>
    </location>
    <ligand>
        <name>ATP</name>
        <dbReference type="ChEBI" id="CHEBI:30616"/>
    </ligand>
</feature>
<comment type="function">
    <text evidence="1">Essential for larval development. Controls the rhythmic contraction of enteric muscles probably by regulating G-protein coupled receptor aex-2-mediated calcium influx in GABAergic DVB neurons. Plays a role in the control of oocyte meiotic maturation by gonadal sheath cells. May play a role in the regulation of neuromuscular junctions.</text>
</comment>
<comment type="catalytic activity">
    <reaction evidence="1">
        <text>L-seryl-[protein] + ATP = O-phospho-L-seryl-[protein] + ADP + H(+)</text>
        <dbReference type="Rhea" id="RHEA:17989"/>
        <dbReference type="Rhea" id="RHEA-COMP:9863"/>
        <dbReference type="Rhea" id="RHEA-COMP:11604"/>
        <dbReference type="ChEBI" id="CHEBI:15378"/>
        <dbReference type="ChEBI" id="CHEBI:29999"/>
        <dbReference type="ChEBI" id="CHEBI:30616"/>
        <dbReference type="ChEBI" id="CHEBI:83421"/>
        <dbReference type="ChEBI" id="CHEBI:456216"/>
        <dbReference type="EC" id="2.7.11.11"/>
    </reaction>
</comment>
<comment type="catalytic activity">
    <reaction evidence="1">
        <text>L-threonyl-[protein] + ATP = O-phospho-L-threonyl-[protein] + ADP + H(+)</text>
        <dbReference type="Rhea" id="RHEA:46608"/>
        <dbReference type="Rhea" id="RHEA-COMP:11060"/>
        <dbReference type="Rhea" id="RHEA-COMP:11605"/>
        <dbReference type="ChEBI" id="CHEBI:15378"/>
        <dbReference type="ChEBI" id="CHEBI:30013"/>
        <dbReference type="ChEBI" id="CHEBI:30616"/>
        <dbReference type="ChEBI" id="CHEBI:61977"/>
        <dbReference type="ChEBI" id="CHEBI:456216"/>
        <dbReference type="EC" id="2.7.11.11"/>
    </reaction>
</comment>
<comment type="activity regulation">
    <text evidence="2">Binding of cAMP to kin-2 regulatory subunits induces dissociation of the heterotetramer. The released catalytic subunits are active and able to phosphorylate their substrates.</text>
</comment>
<comment type="subunit">
    <text evidence="2">Heterotetramer composed of two regulatory subunits and two catalytic subunits.</text>
</comment>
<comment type="developmental stage">
    <text evidence="5">Expressed at low levels in the embryo. Expression increases after hatching and during larval stages and is followed by a decrease in adults (at protein level).</text>
</comment>
<comment type="similarity">
    <text evidence="6">Belongs to the protein kinase superfamily. Ser/Thr protein kinase family. cAMP subfamily.</text>
</comment>
<protein>
    <recommendedName>
        <fullName evidence="1">cAMP-dependent protein kinase catalytic subunit</fullName>
        <shortName evidence="1">PKA C</shortName>
        <ecNumber evidence="1">2.7.11.11</ecNumber>
    </recommendedName>
</protein>
<proteinExistence type="evidence at protein level"/>
<keyword id="KW-0067">ATP-binding</keyword>
<keyword id="KW-0114">cAMP</keyword>
<keyword id="KW-0418">Kinase</keyword>
<keyword id="KW-0547">Nucleotide-binding</keyword>
<keyword id="KW-1185">Reference proteome</keyword>
<keyword id="KW-0723">Serine/threonine-protein kinase</keyword>
<keyword id="KW-0808">Transferase</keyword>
<dbReference type="EC" id="2.7.11.11" evidence="1"/>
<dbReference type="EMBL" id="HE601474">
    <property type="protein sequence ID" value="CAP36907.1"/>
    <property type="molecule type" value="Genomic_DNA"/>
</dbReference>
<dbReference type="FunCoup" id="A8XW88">
    <property type="interactions" value="1886"/>
</dbReference>
<dbReference type="STRING" id="6238.A8XW88"/>
<dbReference type="EnsemblMetazoa" id="CBG19814d.1">
    <property type="protein sequence ID" value="CBG19814d.1"/>
    <property type="gene ID" value="WBGene00038974"/>
</dbReference>
<dbReference type="KEGG" id="cbr:CBG_19814"/>
<dbReference type="CTD" id="8582736"/>
<dbReference type="WormBase" id="CBG19814">
    <property type="protein sequence ID" value="CBP04602"/>
    <property type="gene ID" value="WBGene00038974"/>
    <property type="gene designation" value="Cbr-kin-1"/>
</dbReference>
<dbReference type="eggNOG" id="KOG0616">
    <property type="taxonomic scope" value="Eukaryota"/>
</dbReference>
<dbReference type="HOGENOM" id="CLU_000288_63_5_1"/>
<dbReference type="InParanoid" id="A8XW88"/>
<dbReference type="OMA" id="KHTVVKL"/>
<dbReference type="Proteomes" id="UP000008549">
    <property type="component" value="Unassembled WGS sequence"/>
</dbReference>
<dbReference type="GO" id="GO:0005952">
    <property type="term" value="C:cAMP-dependent protein kinase complex"/>
    <property type="evidence" value="ECO:0000318"/>
    <property type="project" value="GO_Central"/>
</dbReference>
<dbReference type="GO" id="GO:0005829">
    <property type="term" value="C:cytosol"/>
    <property type="evidence" value="ECO:0000318"/>
    <property type="project" value="GO_Central"/>
</dbReference>
<dbReference type="GO" id="GO:0005634">
    <property type="term" value="C:nucleus"/>
    <property type="evidence" value="ECO:0000318"/>
    <property type="project" value="GO_Central"/>
</dbReference>
<dbReference type="GO" id="GO:0005524">
    <property type="term" value="F:ATP binding"/>
    <property type="evidence" value="ECO:0007669"/>
    <property type="project" value="UniProtKB-KW"/>
</dbReference>
<dbReference type="GO" id="GO:0004691">
    <property type="term" value="F:cAMP-dependent protein kinase activity"/>
    <property type="evidence" value="ECO:0000318"/>
    <property type="project" value="GO_Central"/>
</dbReference>
<dbReference type="GO" id="GO:0106310">
    <property type="term" value="F:protein serine kinase activity"/>
    <property type="evidence" value="ECO:0007669"/>
    <property type="project" value="RHEA"/>
</dbReference>
<dbReference type="GO" id="GO:0007165">
    <property type="term" value="P:signal transduction"/>
    <property type="evidence" value="ECO:0000318"/>
    <property type="project" value="GO_Central"/>
</dbReference>
<dbReference type="CDD" id="cd14209">
    <property type="entry name" value="STKc_PKA"/>
    <property type="match status" value="1"/>
</dbReference>
<dbReference type="FunFam" id="3.30.200.20:FF:000005">
    <property type="entry name" value="cAMP-dependent protein kinase catalytic subunit"/>
    <property type="match status" value="1"/>
</dbReference>
<dbReference type="FunFam" id="1.10.510.10:FF:000005">
    <property type="entry name" value="cAMP-dependent protein kinase catalytic subunit alpha"/>
    <property type="match status" value="1"/>
</dbReference>
<dbReference type="Gene3D" id="3.30.200.20">
    <property type="entry name" value="Phosphorylase Kinase, domain 1"/>
    <property type="match status" value="1"/>
</dbReference>
<dbReference type="Gene3D" id="1.10.510.10">
    <property type="entry name" value="Transferase(Phosphotransferase) domain 1"/>
    <property type="match status" value="1"/>
</dbReference>
<dbReference type="InterPro" id="IPR000961">
    <property type="entry name" value="AGC-kinase_C"/>
</dbReference>
<dbReference type="InterPro" id="IPR011009">
    <property type="entry name" value="Kinase-like_dom_sf"/>
</dbReference>
<dbReference type="InterPro" id="IPR000719">
    <property type="entry name" value="Prot_kinase_dom"/>
</dbReference>
<dbReference type="InterPro" id="IPR017441">
    <property type="entry name" value="Protein_kinase_ATP_BS"/>
</dbReference>
<dbReference type="InterPro" id="IPR008271">
    <property type="entry name" value="Ser/Thr_kinase_AS"/>
</dbReference>
<dbReference type="InterPro" id="IPR044109">
    <property type="entry name" value="STKc_PKA"/>
</dbReference>
<dbReference type="PANTHER" id="PTHR24353:SF153">
    <property type="entry name" value="CAMP-DEPENDENT PROTEIN KINASE CATALYTIC SUBUNIT 1"/>
    <property type="match status" value="1"/>
</dbReference>
<dbReference type="PANTHER" id="PTHR24353">
    <property type="entry name" value="CYCLIC NUCLEOTIDE-DEPENDENT PROTEIN KINASE"/>
    <property type="match status" value="1"/>
</dbReference>
<dbReference type="Pfam" id="PF00069">
    <property type="entry name" value="Pkinase"/>
    <property type="match status" value="1"/>
</dbReference>
<dbReference type="SMART" id="SM00133">
    <property type="entry name" value="S_TK_X"/>
    <property type="match status" value="1"/>
</dbReference>
<dbReference type="SMART" id="SM00220">
    <property type="entry name" value="S_TKc"/>
    <property type="match status" value="1"/>
</dbReference>
<dbReference type="SUPFAM" id="SSF56112">
    <property type="entry name" value="Protein kinase-like (PK-like)"/>
    <property type="match status" value="1"/>
</dbReference>
<dbReference type="PROSITE" id="PS00107">
    <property type="entry name" value="PROTEIN_KINASE_ATP"/>
    <property type="match status" value="1"/>
</dbReference>
<dbReference type="PROSITE" id="PS50011">
    <property type="entry name" value="PROTEIN_KINASE_DOM"/>
    <property type="match status" value="1"/>
</dbReference>
<dbReference type="PROSITE" id="PS00108">
    <property type="entry name" value="PROTEIN_KINASE_ST"/>
    <property type="match status" value="1"/>
</dbReference>
<sequence>MLKFLKPKSSDEGSSKDNKSAASLKEFLDKAREDFKQRWENPAQNTACLDDFDRIKTLGTGSFGRVMLVKHKQSGNYYAMKILDKQKVVKLKQVEHTLNEKRILQAIDFPFLVNMTFSFKDNSNLYMVLEFISGGEMFSHLRRIGRFSEPHSRFYAAQIVLAFEYLHSLDLIYRDLKPENLLIDSTGYLKITDFGFAKRVKGRTWTLCGTPEYLAPEIILSKGYNKAVDWWALGVLIYEMAAGYPPFFADQPIQIEKIVSGKVKFPSHFSNELKDLLKNLLQVDLTKRYGNLKNGVADIKNHKWFGSTDWIAIYQRKIEAPFLPKCRGPGDASNFDDYEEEPLRISGTEKCSKEFAEF</sequence>
<organism evidence="7">
    <name type="scientific">Caenorhabditis briggsae</name>
    <dbReference type="NCBI Taxonomy" id="6238"/>
    <lineage>
        <taxon>Eukaryota</taxon>
        <taxon>Metazoa</taxon>
        <taxon>Ecdysozoa</taxon>
        <taxon>Nematoda</taxon>
        <taxon>Chromadorea</taxon>
        <taxon>Rhabditida</taxon>
        <taxon>Rhabditina</taxon>
        <taxon>Rhabditomorpha</taxon>
        <taxon>Rhabditoidea</taxon>
        <taxon>Rhabditidae</taxon>
        <taxon>Peloderinae</taxon>
        <taxon>Caenorhabditis</taxon>
    </lineage>
</organism>
<accession>A8XW88</accession>
<name>KAPC1_CAEBR</name>
<gene>
    <name evidence="8" type="primary">kin-1</name>
    <name evidence="8" type="ORF">CBG19814</name>
</gene>
<evidence type="ECO:0000250" key="1">
    <source>
        <dbReference type="UniProtKB" id="P21137"/>
    </source>
</evidence>
<evidence type="ECO:0000250" key="2">
    <source>
        <dbReference type="UniProtKB" id="P51817"/>
    </source>
</evidence>
<evidence type="ECO:0000255" key="3">
    <source>
        <dbReference type="PROSITE-ProRule" id="PRU00159"/>
    </source>
</evidence>
<evidence type="ECO:0000256" key="4">
    <source>
        <dbReference type="SAM" id="MobiDB-lite"/>
    </source>
</evidence>
<evidence type="ECO:0000269" key="5">
    <source>
    </source>
</evidence>
<evidence type="ECO:0000305" key="6"/>
<evidence type="ECO:0000312" key="7">
    <source>
        <dbReference type="Proteomes" id="UP000008549"/>
    </source>
</evidence>
<evidence type="ECO:0000312" key="8">
    <source>
        <dbReference type="WormBase" id="CBG19814"/>
    </source>
</evidence>